<sequence>METRIVFHIDFDYFYAQCEEIRSPELKSKPVCVCVFSDRGGDSGAIATANYTARKYGAKSGIPIVFAKKRLEERKDAVFLPVDFDYYSEMSEKAMKIMEEFSDVFEYVGRDEAYLDVTKRTEGDFHKASHLAQQIKNSIREKTKLSCSIGISPNKLISKIASDFQKPDGLTIVSPEKVEGFLESLKIRDIPGIGKKTEQRFTEMNLETIGDVKRLDVFTLNKEFGRKSGTYIYNAVRGIDDELVKEREPSIQHGKIVTLKKDSKDYEFLLENTLELCKEVHEIIQKKNQMFKSVGISFVQSDLSNKTKSKMLRNPTMSLEELEKTVEQLLREALENQTATIRRLGVKVSELSESQGQRDITSYF</sequence>
<keyword id="KW-0963">Cytoplasm</keyword>
<keyword id="KW-0227">DNA damage</keyword>
<keyword id="KW-0234">DNA repair</keyword>
<keyword id="KW-0235">DNA replication</keyword>
<keyword id="KW-0238">DNA-binding</keyword>
<keyword id="KW-0239">DNA-directed DNA polymerase</keyword>
<keyword id="KW-0460">Magnesium</keyword>
<keyword id="KW-0479">Metal-binding</keyword>
<keyword id="KW-0515">Mutator protein</keyword>
<keyword id="KW-0548">Nucleotidyltransferase</keyword>
<keyword id="KW-1185">Reference proteome</keyword>
<keyword id="KW-0808">Transferase</keyword>
<protein>
    <recommendedName>
        <fullName evidence="1">DNA polymerase IV</fullName>
        <shortName evidence="1">Pol IV</shortName>
        <ecNumber evidence="1">2.7.7.7</ecNumber>
    </recommendedName>
</protein>
<proteinExistence type="inferred from homology"/>
<feature type="chain" id="PRO_1000137144" description="DNA polymerase IV">
    <location>
        <begin position="1"/>
        <end position="364"/>
    </location>
</feature>
<feature type="domain" description="UmuC" evidence="1">
    <location>
        <begin position="6"/>
        <end position="194"/>
    </location>
</feature>
<feature type="active site" evidence="1">
    <location>
        <position position="112"/>
    </location>
</feature>
<feature type="binding site" evidence="1">
    <location>
        <position position="10"/>
    </location>
    <ligand>
        <name>Mg(2+)</name>
        <dbReference type="ChEBI" id="CHEBI:18420"/>
    </ligand>
</feature>
<feature type="binding site" evidence="1">
    <location>
        <position position="111"/>
    </location>
    <ligand>
        <name>Mg(2+)</name>
        <dbReference type="ChEBI" id="CHEBI:18420"/>
    </ligand>
</feature>
<feature type="site" description="Substrate discrimination" evidence="1">
    <location>
        <position position="15"/>
    </location>
</feature>
<name>DPO4_NITMS</name>
<organism>
    <name type="scientific">Nitrosopumilus maritimus (strain SCM1)</name>
    <dbReference type="NCBI Taxonomy" id="436308"/>
    <lineage>
        <taxon>Archaea</taxon>
        <taxon>Nitrososphaerota</taxon>
        <taxon>Nitrososphaeria</taxon>
        <taxon>Nitrosopumilales</taxon>
        <taxon>Nitrosopumilaceae</taxon>
        <taxon>Nitrosopumilus</taxon>
    </lineage>
</organism>
<accession>A9A3A9</accession>
<comment type="function">
    <text evidence="1">Poorly processive, error-prone DNA polymerase involved in untargeted mutagenesis. Copies undamaged DNA at stalled replication forks, which arise in vivo from mismatched or misaligned primer ends. These misaligned primers can be extended by PolIV. Exhibits no 3'-5' exonuclease (proofreading) activity. May be involved in translesional synthesis.</text>
</comment>
<comment type="catalytic activity">
    <reaction evidence="1">
        <text>DNA(n) + a 2'-deoxyribonucleoside 5'-triphosphate = DNA(n+1) + diphosphate</text>
        <dbReference type="Rhea" id="RHEA:22508"/>
        <dbReference type="Rhea" id="RHEA-COMP:17339"/>
        <dbReference type="Rhea" id="RHEA-COMP:17340"/>
        <dbReference type="ChEBI" id="CHEBI:33019"/>
        <dbReference type="ChEBI" id="CHEBI:61560"/>
        <dbReference type="ChEBI" id="CHEBI:173112"/>
        <dbReference type="EC" id="2.7.7.7"/>
    </reaction>
</comment>
<comment type="cofactor">
    <cofactor evidence="1">
        <name>Mg(2+)</name>
        <dbReference type="ChEBI" id="CHEBI:18420"/>
    </cofactor>
    <text evidence="1">Binds 2 magnesium ions per subunit.</text>
</comment>
<comment type="subunit">
    <text evidence="1">Monomer.</text>
</comment>
<comment type="subcellular location">
    <subcellularLocation>
        <location evidence="1">Cytoplasm</location>
    </subcellularLocation>
</comment>
<comment type="similarity">
    <text evidence="1">Belongs to the DNA polymerase type-Y family.</text>
</comment>
<reference key="1">
    <citation type="journal article" date="2010" name="Proc. Natl. Acad. Sci. U.S.A.">
        <title>Nitrosopumilus maritimus genome reveals unique mechanisms for nitrification and autotrophy in globally distributed marine crenarchaea.</title>
        <authorList>
            <person name="Walker C.B."/>
            <person name="de la Torre J.R."/>
            <person name="Klotz M.G."/>
            <person name="Urakawa H."/>
            <person name="Pinel N."/>
            <person name="Arp D.J."/>
            <person name="Brochier-Armanet C."/>
            <person name="Chain P.S."/>
            <person name="Chan P.P."/>
            <person name="Gollabgir A."/>
            <person name="Hemp J."/>
            <person name="Hugler M."/>
            <person name="Karr E.A."/>
            <person name="Konneke M."/>
            <person name="Shin M."/>
            <person name="Lawton T.J."/>
            <person name="Lowe T."/>
            <person name="Martens-Habbena W."/>
            <person name="Sayavedra-Soto L.A."/>
            <person name="Lang D."/>
            <person name="Sievert S.M."/>
            <person name="Rosenzweig A.C."/>
            <person name="Manning G."/>
            <person name="Stahl D.A."/>
        </authorList>
    </citation>
    <scope>NUCLEOTIDE SEQUENCE [LARGE SCALE GENOMIC DNA]</scope>
    <source>
        <strain>SCM1</strain>
    </source>
</reference>
<dbReference type="EC" id="2.7.7.7" evidence="1"/>
<dbReference type="EMBL" id="CP000866">
    <property type="protein sequence ID" value="ABX12538.1"/>
    <property type="molecule type" value="Genomic_DNA"/>
</dbReference>
<dbReference type="RefSeq" id="WP_012215025.1">
    <property type="nucleotide sequence ID" value="NC_010085.1"/>
</dbReference>
<dbReference type="SMR" id="A9A3A9"/>
<dbReference type="FunCoup" id="A9A3A9">
    <property type="interactions" value="153"/>
</dbReference>
<dbReference type="STRING" id="436308.Nmar_0642"/>
<dbReference type="EnsemblBacteria" id="ABX12538">
    <property type="protein sequence ID" value="ABX12538"/>
    <property type="gene ID" value="Nmar_0642"/>
</dbReference>
<dbReference type="GeneID" id="5774249"/>
<dbReference type="KEGG" id="nmr:Nmar_0642"/>
<dbReference type="eggNOG" id="arCOG04582">
    <property type="taxonomic scope" value="Archaea"/>
</dbReference>
<dbReference type="HOGENOM" id="CLU_012348_1_2_2"/>
<dbReference type="InParanoid" id="A9A3A9"/>
<dbReference type="OrthoDB" id="372207at2157"/>
<dbReference type="PhylomeDB" id="A9A3A9"/>
<dbReference type="Proteomes" id="UP000000792">
    <property type="component" value="Chromosome"/>
</dbReference>
<dbReference type="GO" id="GO:0005737">
    <property type="term" value="C:cytoplasm"/>
    <property type="evidence" value="ECO:0007669"/>
    <property type="project" value="UniProtKB-SubCell"/>
</dbReference>
<dbReference type="GO" id="GO:0003684">
    <property type="term" value="F:damaged DNA binding"/>
    <property type="evidence" value="ECO:0007669"/>
    <property type="project" value="InterPro"/>
</dbReference>
<dbReference type="GO" id="GO:0003887">
    <property type="term" value="F:DNA-directed DNA polymerase activity"/>
    <property type="evidence" value="ECO:0000318"/>
    <property type="project" value="GO_Central"/>
</dbReference>
<dbReference type="GO" id="GO:0000287">
    <property type="term" value="F:magnesium ion binding"/>
    <property type="evidence" value="ECO:0007669"/>
    <property type="project" value="UniProtKB-UniRule"/>
</dbReference>
<dbReference type="GO" id="GO:0006261">
    <property type="term" value="P:DNA-templated DNA replication"/>
    <property type="evidence" value="ECO:0007669"/>
    <property type="project" value="UniProtKB-UniRule"/>
</dbReference>
<dbReference type="GO" id="GO:0042276">
    <property type="term" value="P:error-prone translesion synthesis"/>
    <property type="evidence" value="ECO:0000318"/>
    <property type="project" value="GO_Central"/>
</dbReference>
<dbReference type="CDD" id="cd03586">
    <property type="entry name" value="PolY_Pol_IV_kappa"/>
    <property type="match status" value="1"/>
</dbReference>
<dbReference type="FunFam" id="3.30.70.270:FF:000061">
    <property type="entry name" value="DNA polymerase IV"/>
    <property type="match status" value="1"/>
</dbReference>
<dbReference type="FunFam" id="3.40.1170.60:FF:000009">
    <property type="entry name" value="DNA polymerase IV"/>
    <property type="match status" value="1"/>
</dbReference>
<dbReference type="Gene3D" id="3.30.70.270">
    <property type="match status" value="1"/>
</dbReference>
<dbReference type="Gene3D" id="3.40.1170.60">
    <property type="match status" value="1"/>
</dbReference>
<dbReference type="Gene3D" id="1.10.150.20">
    <property type="entry name" value="5' to 3' exonuclease, C-terminal subdomain"/>
    <property type="match status" value="1"/>
</dbReference>
<dbReference type="Gene3D" id="3.30.1490.100">
    <property type="entry name" value="DNA polymerase, Y-family, little finger domain"/>
    <property type="match status" value="1"/>
</dbReference>
<dbReference type="HAMAP" id="MF_01113">
    <property type="entry name" value="DNApol_IV"/>
    <property type="match status" value="1"/>
</dbReference>
<dbReference type="InterPro" id="IPR043502">
    <property type="entry name" value="DNA/RNA_pol_sf"/>
</dbReference>
<dbReference type="InterPro" id="IPR036775">
    <property type="entry name" value="DNA_pol_Y-fam_lit_finger_sf"/>
</dbReference>
<dbReference type="InterPro" id="IPR017961">
    <property type="entry name" value="DNA_pol_Y-fam_little_finger"/>
</dbReference>
<dbReference type="InterPro" id="IPR050116">
    <property type="entry name" value="DNA_polymerase-Y"/>
</dbReference>
<dbReference type="InterPro" id="IPR022880">
    <property type="entry name" value="DNApol_IV"/>
</dbReference>
<dbReference type="InterPro" id="IPR053848">
    <property type="entry name" value="IMS_HHH_1"/>
</dbReference>
<dbReference type="InterPro" id="IPR043128">
    <property type="entry name" value="Rev_trsase/Diguanyl_cyclase"/>
</dbReference>
<dbReference type="InterPro" id="IPR001126">
    <property type="entry name" value="UmuC"/>
</dbReference>
<dbReference type="NCBIfam" id="NF002677">
    <property type="entry name" value="PRK02406.1"/>
    <property type="match status" value="1"/>
</dbReference>
<dbReference type="PANTHER" id="PTHR11076:SF33">
    <property type="entry name" value="DNA POLYMERASE KAPPA"/>
    <property type="match status" value="1"/>
</dbReference>
<dbReference type="PANTHER" id="PTHR11076">
    <property type="entry name" value="DNA REPAIR POLYMERASE UMUC / TRANSFERASE FAMILY MEMBER"/>
    <property type="match status" value="1"/>
</dbReference>
<dbReference type="Pfam" id="PF00817">
    <property type="entry name" value="IMS"/>
    <property type="match status" value="1"/>
</dbReference>
<dbReference type="Pfam" id="PF11799">
    <property type="entry name" value="IMS_C"/>
    <property type="match status" value="1"/>
</dbReference>
<dbReference type="Pfam" id="PF21999">
    <property type="entry name" value="IMS_HHH_1"/>
    <property type="match status" value="1"/>
</dbReference>
<dbReference type="SUPFAM" id="SSF56672">
    <property type="entry name" value="DNA/RNA polymerases"/>
    <property type="match status" value="1"/>
</dbReference>
<dbReference type="SUPFAM" id="SSF100879">
    <property type="entry name" value="Lesion bypass DNA polymerase (Y-family), little finger domain"/>
    <property type="match status" value="1"/>
</dbReference>
<dbReference type="PROSITE" id="PS50173">
    <property type="entry name" value="UMUC"/>
    <property type="match status" value="1"/>
</dbReference>
<gene>
    <name evidence="1" type="primary">dbh</name>
    <name type="ordered locus">Nmar_0642</name>
</gene>
<evidence type="ECO:0000255" key="1">
    <source>
        <dbReference type="HAMAP-Rule" id="MF_01113"/>
    </source>
</evidence>